<gene>
    <name type="primary">ulaD</name>
    <name type="synonym">sgaH</name>
    <name type="synonym">yjfV</name>
    <name type="ordered locus">b4196</name>
    <name type="ordered locus">JW4154</name>
</gene>
<reference key="1">
    <citation type="journal article" date="1995" name="Nucleic Acids Res.">
        <title>Analysis of the Escherichia coli genome VI: DNA sequence of the region from 92.8 through 100 minutes.</title>
        <authorList>
            <person name="Burland V.D."/>
            <person name="Plunkett G. III"/>
            <person name="Sofia H.J."/>
            <person name="Daniels D.L."/>
            <person name="Blattner F.R."/>
        </authorList>
    </citation>
    <scope>NUCLEOTIDE SEQUENCE [LARGE SCALE GENOMIC DNA]</scope>
    <source>
        <strain>K12 / MG1655 / ATCC 47076</strain>
    </source>
</reference>
<reference key="2">
    <citation type="journal article" date="1997" name="Science">
        <title>The complete genome sequence of Escherichia coli K-12.</title>
        <authorList>
            <person name="Blattner F.R."/>
            <person name="Plunkett G. III"/>
            <person name="Bloch C.A."/>
            <person name="Perna N.T."/>
            <person name="Burland V."/>
            <person name="Riley M."/>
            <person name="Collado-Vides J."/>
            <person name="Glasner J.D."/>
            <person name="Rode C.K."/>
            <person name="Mayhew G.F."/>
            <person name="Gregor J."/>
            <person name="Davis N.W."/>
            <person name="Kirkpatrick H.A."/>
            <person name="Goeden M.A."/>
            <person name="Rose D.J."/>
            <person name="Mau B."/>
            <person name="Shao Y."/>
        </authorList>
    </citation>
    <scope>NUCLEOTIDE SEQUENCE [LARGE SCALE GENOMIC DNA]</scope>
    <source>
        <strain>K12 / MG1655 / ATCC 47076</strain>
    </source>
</reference>
<reference key="3">
    <citation type="journal article" date="2006" name="Mol. Syst. Biol.">
        <title>Highly accurate genome sequences of Escherichia coli K-12 strains MG1655 and W3110.</title>
        <authorList>
            <person name="Hayashi K."/>
            <person name="Morooka N."/>
            <person name="Yamamoto Y."/>
            <person name="Fujita K."/>
            <person name="Isono K."/>
            <person name="Choi S."/>
            <person name="Ohtsubo E."/>
            <person name="Baba T."/>
            <person name="Wanner B.L."/>
            <person name="Mori H."/>
            <person name="Horiuchi T."/>
        </authorList>
    </citation>
    <scope>NUCLEOTIDE SEQUENCE [LARGE SCALE GENOMIC DNA]</scope>
    <source>
        <strain>K12 / W3110 / ATCC 27325 / DSM 5911</strain>
    </source>
</reference>
<reference key="4">
    <citation type="journal article" date="1996" name="Genome Sci. Technol.">
        <title>Novel phosphotransferases system genes revealed by bacterial genome analysis: operons encoding homologues of sugar-specific permease domains of the phosphotransferase system and pentose catabolic enzymes.</title>
        <authorList>
            <person name="Reizer J."/>
            <person name="Charbit A."/>
            <person name="Reizer A."/>
            <person name="Saier M.H. Jr."/>
        </authorList>
    </citation>
    <scope>DISCUSSION OF SEQUENCE</scope>
</reference>
<reference key="5">
    <citation type="journal article" date="1997" name="Microbiology">
        <title>Is the ribulose monophosphate pathway widely distributed in bacteria?</title>
        <authorList>
            <person name="Reizer J."/>
            <person name="Reizer A."/>
            <person name="Saier M.H. Jr."/>
        </authorList>
    </citation>
    <scope>DISCUSSION OF SEQUENCE</scope>
</reference>
<reference key="6">
    <citation type="journal article" date="2002" name="J. Bacteriol.">
        <title>Utilization of L-ascorbate by Escherichia coli K-12: assignments of functions to products of the yjf-sga and yia-sgb operons.</title>
        <authorList>
            <person name="Yew W.S."/>
            <person name="Gerlt J.A."/>
        </authorList>
    </citation>
    <scope>FUNCTION</scope>
    <scope>CATALYTIC ACTIVITY</scope>
    <scope>ROLE IN L-ASCORBATE UTILIZATION</scope>
    <source>
        <strain>K12 / MG1655 / ATCC 47076</strain>
    </source>
</reference>
<reference key="7">
    <citation type="journal article" date="2002" name="J. Bacteriol.">
        <title>The gene yjfQ encodes the repressor of the yjfR-X regulon (ula), which is involved in L-ascorbate metabolism in Escherichia coli.</title>
        <authorList>
            <person name="Campos E."/>
            <person name="Aguilar J."/>
            <person name="Baldoma L."/>
            <person name="Badia J."/>
        </authorList>
    </citation>
    <scope>TRANSCRIPTIONAL REGULATION</scope>
</reference>
<reference key="8">
    <citation type="journal article" date="2004" name="J. Bacteriol.">
        <title>Regulation of expression of the divergent ulaG and ulaABCDEF operons involved in L-ascorbate dissimilation in Escherichia coli.</title>
        <authorList>
            <person name="Campos E."/>
            <person name="Baldoma L."/>
            <person name="Aguilar J."/>
            <person name="Badia J."/>
        </authorList>
    </citation>
    <scope>TRANSCRIPTIONAL REGULATION</scope>
</reference>
<reference key="9">
    <citation type="journal article" date="2004" name="Biochemistry">
        <title>Evolution of enzymatic activities in the orotidine 5'-monophosphate decarboxylase suprafamily: mechanistic evidence for a proton relay system in the active site of 3-keto-L-gulonate 6-phosphate decarboxylase.</title>
        <authorList>
            <person name="Yew W.S."/>
            <person name="Wise E.L."/>
            <person name="Rayment I."/>
            <person name="Gerlt J.A."/>
        </authorList>
    </citation>
    <scope>MUTAGENESIS OF GLU-33; LYS-64; ASP-67; GLU-112; HIS-136 AND ARG-139</scope>
    <scope>KINETIC PARAMETERS</scope>
    <scope>REACTION STEREOCHEMISTRY</scope>
</reference>
<reference key="10">
    <citation type="journal article" date="2005" name="Biochemistry">
        <title>Evolution of enzymatic activities in the orotidine 5'-monophosphate decarboxylase suprafamily: enhancing the promiscuous D-arabino-hex-3-ulose 6-phosphate synthase reaction catalyzed by 3-keto-L-gulonate 6-phosphate decarboxylase.</title>
        <authorList>
            <person name="Yew W.S."/>
            <person name="Akana J."/>
            <person name="Wise E.L."/>
            <person name="Rayment I."/>
            <person name="Gerlt J.A."/>
        </authorList>
    </citation>
    <scope>MUTAGENESIS</scope>
</reference>
<reference key="11">
    <citation type="journal article" date="2002" name="Biochemistry">
        <title>Homologous (beta/alpha)8-barrel enzymes that catalyze unrelated reactions: orotidine 5'-monophosphate decarboxylase and 3-keto-L-gulonate 6-phosphate decarboxylase.</title>
        <authorList>
            <person name="Wise E."/>
            <person name="Yew W.S."/>
            <person name="Babbitt P.C."/>
            <person name="Gerlt J.A."/>
            <person name="Rayment I."/>
        </authorList>
    </citation>
    <scope>X-RAY CRYSTALLOGRAPHY (1.62 ANGSTROMS) OF COMPLEXES WITH MAGNESIUM; PHOSPHATE AND L-GULONATE-6-PHOSPHATE</scope>
    <scope>SUBUNIT</scope>
    <source>
        <strain>K12 / MG1655 / ATCC 47076</strain>
    </source>
</reference>
<reference key="12">
    <citation type="journal article" date="2003" name="Biochemistry">
        <title>Structural evidence for a 1,2-enediolate intermediate in the reaction catalyzed by 3-keto-L-gulonate 6-phosphate decarboxylase, a member of the orotidine 5'-monophosphate decarboxylase suprafamily.</title>
        <authorList>
            <person name="Wise E.L."/>
            <person name="Yew W.S."/>
            <person name="Gerlt J.A."/>
            <person name="Rayment I."/>
        </authorList>
    </citation>
    <scope>X-RAY CRYSTALLOGRAPHY (1.2 ANGSTROMS) OF COMPLEXES WITH L-GULONATE 6-PHOSPHATE; L-THREONOHYDROXAMATE 4-PHOSPHATE; L-XYLITOL 5-PHOSPHATE AND L-XYLULOSE 5-PHOSPHATE</scope>
    <source>
        <strain>K12 / MG1655 / ATCC 47076</strain>
    </source>
</reference>
<reference key="13">
    <citation type="journal article" date="2004" name="Biochemistry">
        <title>Evolution of enzymatic activities in the orotidine 5'-monophosphate decarboxylase suprafamily: crystallographic evidence for a proton relay system in the active site of 3-keto-L-gulonate 6-phosphate decarboxylase.</title>
        <authorList>
            <person name="Wise E.L."/>
            <person name="Yew W.S."/>
            <person name="Gerlt J.A."/>
            <person name="Rayment I."/>
        </authorList>
    </citation>
    <scope>X-RAY CRYSTALLOGRAPHY (1.7 ANGSTROMS) OF MUTANTS ALA-64; ALA-136; GLN-112 AND GLN-112/ALA-136 IN COMPLEX WITH L-THREONOHYDROXAMATE 4-PHOSPHATE</scope>
    <scope>REACTION MECHANISM</scope>
</reference>
<reference key="14">
    <citation type="journal article" date="2005" name="Biochemistry">
        <title>Evolution of enzymatic activities in the orotidine 5'-monophosphate decarboxylase suprafamily: structural basis for catalytic promiscuity in wild-type and designed mutants of 3-keto-L-gulonate 6-phosphate decarboxylase.</title>
        <authorList>
            <person name="Wise E.L."/>
            <person name="Yew W.S."/>
            <person name="Akana J."/>
            <person name="Gerlt J.A."/>
            <person name="Rayment I."/>
        </authorList>
    </citation>
    <scope>X-RAY CRYSTALLOGRAPHY (1.6 ANGSTROMS) OF NATIVE PROTEIN IN COMPLEX WITH D-RIBULOSE 5-PHOSPHATE; MUTANTS ASP-112/ALA-169 AND ASP-11/VAL-139/ALA-169 IN COMPLEX WITH D-RIBULOSE 5-PHOSPHATE AND MUTANT ASP-11/VAL-139/ALA-169 IN COMPLEX WITH L-XYLULOSE 5-PHOSPHATE</scope>
</reference>
<proteinExistence type="evidence at protein level"/>
<feature type="chain" id="PRO_0000212103" description="3-keto-L-gulonate-6-phosphate decarboxylase UlaD">
    <location>
        <begin position="1"/>
        <end position="216"/>
    </location>
</feature>
<feature type="binding site">
    <location>
        <position position="11"/>
    </location>
    <ligand>
        <name>substrate</name>
    </ligand>
</feature>
<feature type="binding site">
    <location>
        <position position="33"/>
    </location>
    <ligand>
        <name>Mg(2+)</name>
        <dbReference type="ChEBI" id="CHEBI:18420"/>
    </ligand>
</feature>
<feature type="binding site">
    <location>
        <position position="62"/>
    </location>
    <ligand>
        <name>Mg(2+)</name>
        <dbReference type="ChEBI" id="CHEBI:18420"/>
    </ligand>
</feature>
<feature type="binding site">
    <location>
        <position position="192"/>
    </location>
    <ligand>
        <name>substrate</name>
    </ligand>
</feature>
<feature type="site" description="Transition state stabilizer">
    <location>
        <position position="64"/>
    </location>
</feature>
<feature type="site" description="Transition state stabilizer">
    <location>
        <position position="67"/>
    </location>
</feature>
<feature type="mutagenesis site" description="Loss of activity." evidence="5">
    <original>E</original>
    <variation>K</variation>
    <location>
        <position position="33"/>
    </location>
</feature>
<feature type="mutagenesis site" description="16% of wild-type activity." evidence="5">
    <original>K</original>
    <variation>A</variation>
    <location>
        <position position="64"/>
    </location>
</feature>
<feature type="mutagenesis site" description="5% of wild-type activity." evidence="5">
    <original>D</original>
    <variation>A</variation>
    <location>
        <position position="67"/>
    </location>
</feature>
<feature type="mutagenesis site" description="0.5% of wild-type activity." evidence="5">
    <original>E</original>
    <variation>A</variation>
    <location>
        <position position="112"/>
    </location>
</feature>
<feature type="mutagenesis site" description="5% of wild-type activity." evidence="5">
    <original>H</original>
    <variation>A</variation>
    <location>
        <position position="136"/>
    </location>
</feature>
<feature type="mutagenesis site" description="17% of wild-type activity." evidence="5">
    <original>R</original>
    <variation>V</variation>
    <location>
        <position position="139"/>
    </location>
</feature>
<feature type="strand" evidence="10">
    <location>
        <begin position="5"/>
        <end position="10"/>
    </location>
</feature>
<feature type="helix" evidence="10">
    <location>
        <begin position="15"/>
        <end position="25"/>
    </location>
</feature>
<feature type="helix" evidence="10">
    <location>
        <begin position="26"/>
        <end position="28"/>
    </location>
</feature>
<feature type="strand" evidence="10">
    <location>
        <begin position="30"/>
        <end position="34"/>
    </location>
</feature>
<feature type="helix" evidence="10">
    <location>
        <begin position="36"/>
        <end position="42"/>
    </location>
</feature>
<feature type="helix" evidence="10">
    <location>
        <begin position="45"/>
        <end position="53"/>
    </location>
</feature>
<feature type="strand" evidence="10">
    <location>
        <begin position="57"/>
        <end position="65"/>
    </location>
</feature>
<feature type="helix" evidence="10">
    <location>
        <begin position="69"/>
        <end position="78"/>
    </location>
</feature>
<feature type="strand" evidence="10">
    <location>
        <begin position="82"/>
        <end position="87"/>
    </location>
</feature>
<feature type="helix" evidence="10">
    <location>
        <begin position="92"/>
        <end position="104"/>
    </location>
</feature>
<feature type="strand" evidence="10">
    <location>
        <begin position="108"/>
        <end position="113"/>
    </location>
</feature>
<feature type="helix" evidence="10">
    <location>
        <begin position="119"/>
        <end position="127"/>
    </location>
</feature>
<feature type="strand" evidence="10">
    <location>
        <begin position="132"/>
        <end position="136"/>
    </location>
</feature>
<feature type="helix" evidence="10">
    <location>
        <begin position="139"/>
        <end position="143"/>
    </location>
</feature>
<feature type="helix" evidence="10">
    <location>
        <begin position="150"/>
        <end position="161"/>
    </location>
</feature>
<feature type="strand" evidence="10">
    <location>
        <begin position="165"/>
        <end position="171"/>
    </location>
</feature>
<feature type="helix" evidence="10">
    <location>
        <begin position="174"/>
        <end position="180"/>
    </location>
</feature>
<feature type="strand" evidence="10">
    <location>
        <begin position="186"/>
        <end position="191"/>
    </location>
</feature>
<feature type="helix" evidence="10">
    <location>
        <begin position="192"/>
        <end position="195"/>
    </location>
</feature>
<feature type="strand" evidence="9">
    <location>
        <begin position="197"/>
        <end position="199"/>
    </location>
</feature>
<feature type="helix" evidence="10">
    <location>
        <begin position="200"/>
        <end position="214"/>
    </location>
</feature>
<dbReference type="EC" id="4.1.1.85" evidence="1"/>
<dbReference type="EMBL" id="U14003">
    <property type="protein sequence ID" value="AAA97092.1"/>
    <property type="molecule type" value="Genomic_DNA"/>
</dbReference>
<dbReference type="EMBL" id="U00096">
    <property type="protein sequence ID" value="AAC77153.1"/>
    <property type="molecule type" value="Genomic_DNA"/>
</dbReference>
<dbReference type="EMBL" id="AP009048">
    <property type="protein sequence ID" value="BAE78197.1"/>
    <property type="molecule type" value="Genomic_DNA"/>
</dbReference>
<dbReference type="PIR" id="S56421">
    <property type="entry name" value="S56421"/>
</dbReference>
<dbReference type="RefSeq" id="NP_418617.1">
    <property type="nucleotide sequence ID" value="NC_000913.3"/>
</dbReference>
<dbReference type="RefSeq" id="WP_000056749.1">
    <property type="nucleotide sequence ID" value="NZ_LN832404.1"/>
</dbReference>
<dbReference type="PDB" id="1KV8">
    <property type="method" value="X-ray"/>
    <property type="resolution" value="1.62 A"/>
    <property type="chains" value="A/B=1-216"/>
</dbReference>
<dbReference type="PDB" id="1KW1">
    <property type="method" value="X-ray"/>
    <property type="resolution" value="2.20 A"/>
    <property type="chains" value="A/B=1-216"/>
</dbReference>
<dbReference type="PDB" id="1Q6L">
    <property type="method" value="X-ray"/>
    <property type="resolution" value="1.80 A"/>
    <property type="chains" value="A/B=1-216"/>
</dbReference>
<dbReference type="PDB" id="1Q6O">
    <property type="method" value="X-ray"/>
    <property type="resolution" value="1.20 A"/>
    <property type="chains" value="A/B=1-216"/>
</dbReference>
<dbReference type="PDB" id="1Q6Q">
    <property type="method" value="X-ray"/>
    <property type="resolution" value="1.70 A"/>
    <property type="chains" value="A/B=1-216"/>
</dbReference>
<dbReference type="PDB" id="1Q6R">
    <property type="method" value="X-ray"/>
    <property type="resolution" value="1.76 A"/>
    <property type="chains" value="A/B=1-216"/>
</dbReference>
<dbReference type="PDB" id="1SO3">
    <property type="method" value="X-ray"/>
    <property type="resolution" value="1.90 A"/>
    <property type="chains" value="A/B=1-216"/>
</dbReference>
<dbReference type="PDB" id="1SO4">
    <property type="method" value="X-ray"/>
    <property type="resolution" value="1.70 A"/>
    <property type="chains" value="A/B=1-216"/>
</dbReference>
<dbReference type="PDB" id="1SO5">
    <property type="method" value="X-ray"/>
    <property type="resolution" value="1.80 A"/>
    <property type="chains" value="A/B=1-216"/>
</dbReference>
<dbReference type="PDB" id="1SO6">
    <property type="method" value="X-ray"/>
    <property type="resolution" value="1.90 A"/>
    <property type="chains" value="A/B=1-216"/>
</dbReference>
<dbReference type="PDB" id="1XBV">
    <property type="method" value="X-ray"/>
    <property type="resolution" value="1.66 A"/>
    <property type="chains" value="A/B=1-216"/>
</dbReference>
<dbReference type="PDB" id="1XBX">
    <property type="method" value="X-ray"/>
    <property type="resolution" value="1.81 A"/>
    <property type="chains" value="A/B=1-216"/>
</dbReference>
<dbReference type="PDB" id="1XBY">
    <property type="method" value="X-ray"/>
    <property type="resolution" value="1.58 A"/>
    <property type="chains" value="A/B=1-216"/>
</dbReference>
<dbReference type="PDB" id="1XBZ">
    <property type="method" value="X-ray"/>
    <property type="resolution" value="1.80 A"/>
    <property type="chains" value="A/B=1-216"/>
</dbReference>
<dbReference type="PDBsum" id="1KV8"/>
<dbReference type="PDBsum" id="1KW1"/>
<dbReference type="PDBsum" id="1Q6L"/>
<dbReference type="PDBsum" id="1Q6O"/>
<dbReference type="PDBsum" id="1Q6Q"/>
<dbReference type="PDBsum" id="1Q6R"/>
<dbReference type="PDBsum" id="1SO3"/>
<dbReference type="PDBsum" id="1SO4"/>
<dbReference type="PDBsum" id="1SO5"/>
<dbReference type="PDBsum" id="1SO6"/>
<dbReference type="PDBsum" id="1XBV"/>
<dbReference type="PDBsum" id="1XBX"/>
<dbReference type="PDBsum" id="1XBY"/>
<dbReference type="PDBsum" id="1XBZ"/>
<dbReference type="SMR" id="P39304"/>
<dbReference type="BioGRID" id="4262000">
    <property type="interactions" value="16"/>
</dbReference>
<dbReference type="DIP" id="DIP-10869N"/>
<dbReference type="FunCoup" id="P39304">
    <property type="interactions" value="150"/>
</dbReference>
<dbReference type="IntAct" id="P39304">
    <property type="interactions" value="1"/>
</dbReference>
<dbReference type="STRING" id="511145.b4196"/>
<dbReference type="DrugBank" id="DB01655">
    <property type="generic name" value="L-gulonic acid 6-phosphate"/>
</dbReference>
<dbReference type="DrugBank" id="DB03855">
    <property type="generic name" value="L-Threonohydroxamate 4-Phosphate"/>
</dbReference>
<dbReference type="DrugBank" id="DB02630">
    <property type="generic name" value="L-xylitol 5-phosphate"/>
</dbReference>
<dbReference type="DrugBank" id="DB01923">
    <property type="generic name" value="L-Xylulose 5-Phosphate"/>
</dbReference>
<dbReference type="DrugBank" id="DB04034">
    <property type="generic name" value="Ribulose-5-Phosphate"/>
</dbReference>
<dbReference type="PaxDb" id="511145-b4196"/>
<dbReference type="EnsemblBacteria" id="AAC77153">
    <property type="protein sequence ID" value="AAC77153"/>
    <property type="gene ID" value="b4196"/>
</dbReference>
<dbReference type="GeneID" id="948714"/>
<dbReference type="KEGG" id="ecj:JW4154"/>
<dbReference type="KEGG" id="eco:b4196"/>
<dbReference type="KEGG" id="ecoc:C3026_22665"/>
<dbReference type="PATRIC" id="fig|1411691.4.peg.2505"/>
<dbReference type="EchoBASE" id="EB2389"/>
<dbReference type="eggNOG" id="COG0269">
    <property type="taxonomic scope" value="Bacteria"/>
</dbReference>
<dbReference type="HOGENOM" id="CLU_081825_0_0_6"/>
<dbReference type="InParanoid" id="P39304"/>
<dbReference type="OMA" id="WEQAQEW"/>
<dbReference type="OrthoDB" id="43475at2"/>
<dbReference type="PhylomeDB" id="P39304"/>
<dbReference type="BioCyc" id="EcoCyc:G7858-MONOMER"/>
<dbReference type="BioCyc" id="MetaCyc:G7858-MONOMER"/>
<dbReference type="BRENDA" id="4.1.1.85">
    <property type="organism ID" value="2026"/>
</dbReference>
<dbReference type="SABIO-RK" id="P39304"/>
<dbReference type="UniPathway" id="UPA00263">
    <property type="reaction ID" value="UER00378"/>
</dbReference>
<dbReference type="EvolutionaryTrace" id="P39304"/>
<dbReference type="PRO" id="PR:P39304"/>
<dbReference type="Proteomes" id="UP000000625">
    <property type="component" value="Chromosome"/>
</dbReference>
<dbReference type="GO" id="GO:0033982">
    <property type="term" value="F:3-dehydro-L-gulonate-6-phosphate decarboxylase activity"/>
    <property type="evidence" value="ECO:0000314"/>
    <property type="project" value="EcoCyc"/>
</dbReference>
<dbReference type="GO" id="GO:0000287">
    <property type="term" value="F:magnesium ion binding"/>
    <property type="evidence" value="ECO:0000314"/>
    <property type="project" value="EcoCyc"/>
</dbReference>
<dbReference type="GO" id="GO:0004590">
    <property type="term" value="F:orotidine-5'-phosphate decarboxylase activity"/>
    <property type="evidence" value="ECO:0007669"/>
    <property type="project" value="InterPro"/>
</dbReference>
<dbReference type="GO" id="GO:0006207">
    <property type="term" value="P:'de novo' pyrimidine nucleobase biosynthetic process"/>
    <property type="evidence" value="ECO:0007669"/>
    <property type="project" value="InterPro"/>
</dbReference>
<dbReference type="GO" id="GO:0019854">
    <property type="term" value="P:L-ascorbic acid catabolic process"/>
    <property type="evidence" value="ECO:0000270"/>
    <property type="project" value="EcoCyc"/>
</dbReference>
<dbReference type="CDD" id="cd04726">
    <property type="entry name" value="KGPDC_HPS"/>
    <property type="match status" value="1"/>
</dbReference>
<dbReference type="FunFam" id="3.20.20.70:FF:000022">
    <property type="entry name" value="3-keto-L-gulonate-6-phosphate decarboxylase UlaD"/>
    <property type="match status" value="1"/>
</dbReference>
<dbReference type="Gene3D" id="3.20.20.70">
    <property type="entry name" value="Aldolase class I"/>
    <property type="match status" value="1"/>
</dbReference>
<dbReference type="HAMAP" id="MF_01267">
    <property type="entry name" value="UlaD"/>
    <property type="match status" value="1"/>
</dbReference>
<dbReference type="InterPro" id="IPR023942">
    <property type="entry name" value="3-keto-L-gulonate6Pdecase_UlaD"/>
</dbReference>
<dbReference type="InterPro" id="IPR013785">
    <property type="entry name" value="Aldolase_TIM"/>
</dbReference>
<dbReference type="InterPro" id="IPR041710">
    <property type="entry name" value="HPS/KGPDC"/>
</dbReference>
<dbReference type="InterPro" id="IPR001754">
    <property type="entry name" value="OMPdeCOase_dom"/>
</dbReference>
<dbReference type="InterPro" id="IPR011060">
    <property type="entry name" value="RibuloseP-bd_barrel"/>
</dbReference>
<dbReference type="NCBIfam" id="NF009832">
    <property type="entry name" value="PRK13306.1"/>
    <property type="match status" value="1"/>
</dbReference>
<dbReference type="PANTHER" id="PTHR35039">
    <property type="entry name" value="3-KETO-L-GULONATE-6-PHOSPHATE DECARBOXYLASE SGBH-RELATED"/>
    <property type="match status" value="1"/>
</dbReference>
<dbReference type="PANTHER" id="PTHR35039:SF3">
    <property type="entry name" value="3-KETO-L-GULONATE-6-PHOSPHATE DECARBOXYLASE SGBH-RELATED"/>
    <property type="match status" value="1"/>
</dbReference>
<dbReference type="Pfam" id="PF00215">
    <property type="entry name" value="OMPdecase"/>
    <property type="match status" value="1"/>
</dbReference>
<dbReference type="SMART" id="SM00934">
    <property type="entry name" value="OMPdecase"/>
    <property type="match status" value="1"/>
</dbReference>
<dbReference type="SUPFAM" id="SSF51366">
    <property type="entry name" value="Ribulose-phoshate binding barrel"/>
    <property type="match status" value="1"/>
</dbReference>
<organism>
    <name type="scientific">Escherichia coli (strain K12)</name>
    <dbReference type="NCBI Taxonomy" id="83333"/>
    <lineage>
        <taxon>Bacteria</taxon>
        <taxon>Pseudomonadati</taxon>
        <taxon>Pseudomonadota</taxon>
        <taxon>Gammaproteobacteria</taxon>
        <taxon>Enterobacterales</taxon>
        <taxon>Enterobacteriaceae</taxon>
        <taxon>Escherichia</taxon>
    </lineage>
</organism>
<name>ULAD_ECOLI</name>
<comment type="function">
    <text evidence="1">Catalyzes the decarboxylation of 3-keto-L-gulonate-6-P into L-xylulose-5-P. Is involved in the anaerobic L-ascorbate utilization.</text>
</comment>
<comment type="catalytic activity">
    <reaction evidence="1">
        <text>3-dehydro-L-gulonate 6-phosphate + H(+) = L-xylulose 5-phosphate + CO2</text>
        <dbReference type="Rhea" id="RHEA:14353"/>
        <dbReference type="ChEBI" id="CHEBI:15378"/>
        <dbReference type="ChEBI" id="CHEBI:16526"/>
        <dbReference type="ChEBI" id="CHEBI:57829"/>
        <dbReference type="ChEBI" id="CHEBI:58774"/>
        <dbReference type="EC" id="4.1.1.85"/>
    </reaction>
    <physiologicalReaction direction="left-to-right" evidence="1">
        <dbReference type="Rhea" id="RHEA:14354"/>
    </physiologicalReaction>
</comment>
<comment type="cofactor">
    <cofactor>
        <name>Mg(2+)</name>
        <dbReference type="ChEBI" id="CHEBI:18420"/>
    </cofactor>
    <text>Binds 1 Mg(2+) ion per subunit.</text>
</comment>
<comment type="biophysicochemical properties">
    <kinetics>
        <KM evidence="5">0.67 mM for 3-keto-L-gulonate-6-P</KM>
    </kinetics>
</comment>
<comment type="pathway">
    <text>Cofactor degradation; L-ascorbate degradation; D-xylulose 5-phosphate from L-ascorbate: step 2/4.</text>
</comment>
<comment type="subunit">
    <text evidence="2 6 7">Homodimer.</text>
</comment>
<comment type="induction">
    <text evidence="3 4">Induced by L-ascorbate. Repressed by UlaR.</text>
</comment>
<comment type="miscellaneous">
    <text>The reaction mechanism proceeds via the formation of a Mg(2+) ion-stabilized 1,2-cis-enediolate intermediate. Water molecules competitively shuttle protons from the side chains of His-136 and Arg-139 to alternate faces of this intermediate. The active site is located at the interface of the component polypeptides.</text>
</comment>
<comment type="similarity">
    <text evidence="8">Belongs to the HPS/KGPDC family. KGPDC subfamily.</text>
</comment>
<evidence type="ECO:0000269" key="1">
    <source>
    </source>
</evidence>
<evidence type="ECO:0000269" key="2">
    <source>
    </source>
</evidence>
<evidence type="ECO:0000269" key="3">
    <source>
    </source>
</evidence>
<evidence type="ECO:0000269" key="4">
    <source>
    </source>
</evidence>
<evidence type="ECO:0000269" key="5">
    <source>
    </source>
</evidence>
<evidence type="ECO:0000269" key="6">
    <source>
    </source>
</evidence>
<evidence type="ECO:0000269" key="7">
    <source>
    </source>
</evidence>
<evidence type="ECO:0000305" key="8"/>
<evidence type="ECO:0007829" key="9">
    <source>
        <dbReference type="PDB" id="1KV8"/>
    </source>
</evidence>
<evidence type="ECO:0007829" key="10">
    <source>
        <dbReference type="PDB" id="1Q6O"/>
    </source>
</evidence>
<protein>
    <recommendedName>
        <fullName>3-keto-L-gulonate-6-phosphate decarboxylase UlaD</fullName>
        <ecNumber evidence="1">4.1.1.85</ecNumber>
    </recommendedName>
    <alternativeName>
        <fullName>3-dehydro-L-gulonate-6-phosphate decarboxylase</fullName>
    </alternativeName>
    <alternativeName>
        <fullName>KGPDC</fullName>
    </alternativeName>
    <alternativeName>
        <fullName>L-ascorbate utilization protein D</fullName>
    </alternativeName>
</protein>
<accession>P39304</accession>
<accession>Q2M6A9</accession>
<keyword id="KW-0002">3D-structure</keyword>
<keyword id="KW-0119">Carbohydrate metabolism</keyword>
<keyword id="KW-0210">Decarboxylase</keyword>
<keyword id="KW-0456">Lyase</keyword>
<keyword id="KW-0460">Magnesium</keyword>
<keyword id="KW-0479">Metal-binding</keyword>
<keyword id="KW-1185">Reference proteome</keyword>
<sequence>MSLPMLQVALDNQTMDSAYETTRLIAEEVDIIEVGTILCVGEGVRAVRDLKALYPHKIVLADAKIADAGKILSRMCFEANADWVTVICCADINTAKGALDVAKEFNGDVQIELTGYWTWEQAQQWRDAGIGQVVYHRSRDAQAAGVAWGEADITAIKRLSDMGFKVTVTGGLALEDLPLFKGIPIHVFIAGRSIRDAASPVEAARQFKRSIAELWG</sequence>